<protein>
    <recommendedName>
        <fullName evidence="2">Small ribosomal subunit protein uS12</fullName>
    </recommendedName>
    <alternativeName>
        <fullName>40S ribosomal protein S23</fullName>
    </alternativeName>
</protein>
<proteinExistence type="inferred from homology"/>
<feature type="chain" id="PRO_0000146476" description="Small ribosomal subunit protein uS12">
    <location>
        <begin position="1"/>
        <end position="145"/>
    </location>
</feature>
<feature type="modified residue" description="Hydroxyproline" evidence="1">
    <location>
        <position position="64"/>
    </location>
</feature>
<sequence>MGKGKPRGLNSARKLRVHRRNNRWAENNYKKRLLGTAFKSSPFGGSSHAKGIVLEKLGIESKQPNSAIRKCVRVQLIKNGKKVTAFVPNDGCLNFVDENDEVLLAGFGRKGKAKGDIPGVRFKVVKVSGVSLLALWKEKKEKPRS</sequence>
<organism>
    <name type="scientific">Candida glabrata (strain ATCC 2001 / BCRC 20586 / JCM 3761 / NBRC 0622 / NRRL Y-65 / CBS 138)</name>
    <name type="common">Yeast</name>
    <name type="synonym">Nakaseomyces glabratus</name>
    <dbReference type="NCBI Taxonomy" id="284593"/>
    <lineage>
        <taxon>Eukaryota</taxon>
        <taxon>Fungi</taxon>
        <taxon>Dikarya</taxon>
        <taxon>Ascomycota</taxon>
        <taxon>Saccharomycotina</taxon>
        <taxon>Saccharomycetes</taxon>
        <taxon>Saccharomycetales</taxon>
        <taxon>Saccharomycetaceae</taxon>
        <taxon>Nakaseomyces</taxon>
    </lineage>
</organism>
<keyword id="KW-0379">Hydroxylation</keyword>
<keyword id="KW-1185">Reference proteome</keyword>
<keyword id="KW-0687">Ribonucleoprotein</keyword>
<keyword id="KW-0689">Ribosomal protein</keyword>
<dbReference type="EMBL" id="CR380958">
    <property type="protein sequence ID" value="CAG61956.1"/>
    <property type="molecule type" value="Genomic_DNA"/>
</dbReference>
<dbReference type="RefSeq" id="XP_448986.1">
    <property type="nucleotide sequence ID" value="XM_448986.1"/>
</dbReference>
<dbReference type="SMR" id="Q6FLA8"/>
<dbReference type="FunCoup" id="Q6FLA8">
    <property type="interactions" value="908"/>
</dbReference>
<dbReference type="STRING" id="284593.Q6FLA8"/>
<dbReference type="EnsemblFungi" id="CAGL0L04840g-T">
    <property type="protein sequence ID" value="CAGL0L04840g-T-p1"/>
    <property type="gene ID" value="CAGL0L04840g"/>
</dbReference>
<dbReference type="KEGG" id="cgr:2890709"/>
<dbReference type="CGD" id="CAL0135448">
    <property type="gene designation" value="CAGL0L04840g"/>
</dbReference>
<dbReference type="VEuPathDB" id="FungiDB:B1J91_L04840g"/>
<dbReference type="VEuPathDB" id="FungiDB:CAGL0L04840g"/>
<dbReference type="eggNOG" id="KOG1749">
    <property type="taxonomic scope" value="Eukaryota"/>
</dbReference>
<dbReference type="HOGENOM" id="CLU_115574_0_1_1"/>
<dbReference type="InParanoid" id="Q6FLA8"/>
<dbReference type="OMA" id="KFRWSQR"/>
<dbReference type="Proteomes" id="UP000002428">
    <property type="component" value="Chromosome L"/>
</dbReference>
<dbReference type="GO" id="GO:0022627">
    <property type="term" value="C:cytosolic small ribosomal subunit"/>
    <property type="evidence" value="ECO:0007669"/>
    <property type="project" value="EnsemblFungi"/>
</dbReference>
<dbReference type="GO" id="GO:0062040">
    <property type="term" value="C:fungal biofilm matrix"/>
    <property type="evidence" value="ECO:0000314"/>
    <property type="project" value="CGD"/>
</dbReference>
<dbReference type="GO" id="GO:0003735">
    <property type="term" value="F:structural constituent of ribosome"/>
    <property type="evidence" value="ECO:0007669"/>
    <property type="project" value="EnsemblFungi"/>
</dbReference>
<dbReference type="GO" id="GO:1990145">
    <property type="term" value="P:maintenance of translational fidelity"/>
    <property type="evidence" value="ECO:0007669"/>
    <property type="project" value="EnsemblFungi"/>
</dbReference>
<dbReference type="GO" id="GO:0000462">
    <property type="term" value="P:maturation of SSU-rRNA from tricistronic rRNA transcript (SSU-rRNA, 5.8S rRNA, LSU-rRNA)"/>
    <property type="evidence" value="ECO:0007669"/>
    <property type="project" value="EnsemblFungi"/>
</dbReference>
<dbReference type="GO" id="GO:0006450">
    <property type="term" value="P:regulation of translational fidelity"/>
    <property type="evidence" value="ECO:0007669"/>
    <property type="project" value="EnsemblFungi"/>
</dbReference>
<dbReference type="CDD" id="cd03367">
    <property type="entry name" value="Ribosomal_S23"/>
    <property type="match status" value="1"/>
</dbReference>
<dbReference type="FunFam" id="2.40.50.140:FF:000007">
    <property type="entry name" value="40S ribosomal protein S23"/>
    <property type="match status" value="1"/>
</dbReference>
<dbReference type="Gene3D" id="2.40.50.140">
    <property type="entry name" value="Nucleic acid-binding proteins"/>
    <property type="match status" value="1"/>
</dbReference>
<dbReference type="InterPro" id="IPR012340">
    <property type="entry name" value="NA-bd_OB-fold"/>
</dbReference>
<dbReference type="InterPro" id="IPR006032">
    <property type="entry name" value="Ribosomal_uS12"/>
</dbReference>
<dbReference type="InterPro" id="IPR005680">
    <property type="entry name" value="Ribosomal_uS12_euk/arc"/>
</dbReference>
<dbReference type="NCBIfam" id="NF003254">
    <property type="entry name" value="PRK04211.1"/>
    <property type="match status" value="1"/>
</dbReference>
<dbReference type="NCBIfam" id="TIGR00982">
    <property type="entry name" value="uS12_E_A"/>
    <property type="match status" value="1"/>
</dbReference>
<dbReference type="PANTHER" id="PTHR11652">
    <property type="entry name" value="30S RIBOSOMAL PROTEIN S12 FAMILY MEMBER"/>
    <property type="match status" value="1"/>
</dbReference>
<dbReference type="Pfam" id="PF00164">
    <property type="entry name" value="Ribosom_S12_S23"/>
    <property type="match status" value="1"/>
</dbReference>
<dbReference type="PIRSF" id="PIRSF002133">
    <property type="entry name" value="Ribosomal_S12/S23"/>
    <property type="match status" value="1"/>
</dbReference>
<dbReference type="SUPFAM" id="SSF50249">
    <property type="entry name" value="Nucleic acid-binding proteins"/>
    <property type="match status" value="1"/>
</dbReference>
<dbReference type="PROSITE" id="PS00055">
    <property type="entry name" value="RIBOSOMAL_S12"/>
    <property type="match status" value="1"/>
</dbReference>
<gene>
    <name type="primary">RPS23</name>
    <name type="ordered locus">CAGL0L04840g</name>
</gene>
<comment type="similarity">
    <text evidence="2">Belongs to the universal ribosomal protein uS12 family.</text>
</comment>
<reference key="1">
    <citation type="journal article" date="2004" name="Nature">
        <title>Genome evolution in yeasts.</title>
        <authorList>
            <person name="Dujon B."/>
            <person name="Sherman D."/>
            <person name="Fischer G."/>
            <person name="Durrens P."/>
            <person name="Casaregola S."/>
            <person name="Lafontaine I."/>
            <person name="de Montigny J."/>
            <person name="Marck C."/>
            <person name="Neuveglise C."/>
            <person name="Talla E."/>
            <person name="Goffard N."/>
            <person name="Frangeul L."/>
            <person name="Aigle M."/>
            <person name="Anthouard V."/>
            <person name="Babour A."/>
            <person name="Barbe V."/>
            <person name="Barnay S."/>
            <person name="Blanchin S."/>
            <person name="Beckerich J.-M."/>
            <person name="Beyne E."/>
            <person name="Bleykasten C."/>
            <person name="Boisrame A."/>
            <person name="Boyer J."/>
            <person name="Cattolico L."/>
            <person name="Confanioleri F."/>
            <person name="de Daruvar A."/>
            <person name="Despons L."/>
            <person name="Fabre E."/>
            <person name="Fairhead C."/>
            <person name="Ferry-Dumazet H."/>
            <person name="Groppi A."/>
            <person name="Hantraye F."/>
            <person name="Hennequin C."/>
            <person name="Jauniaux N."/>
            <person name="Joyet P."/>
            <person name="Kachouri R."/>
            <person name="Kerrest A."/>
            <person name="Koszul R."/>
            <person name="Lemaire M."/>
            <person name="Lesur I."/>
            <person name="Ma L."/>
            <person name="Muller H."/>
            <person name="Nicaud J.-M."/>
            <person name="Nikolski M."/>
            <person name="Oztas S."/>
            <person name="Ozier-Kalogeropoulos O."/>
            <person name="Pellenz S."/>
            <person name="Potier S."/>
            <person name="Richard G.-F."/>
            <person name="Straub M.-L."/>
            <person name="Suleau A."/>
            <person name="Swennen D."/>
            <person name="Tekaia F."/>
            <person name="Wesolowski-Louvel M."/>
            <person name="Westhof E."/>
            <person name="Wirth B."/>
            <person name="Zeniou-Meyer M."/>
            <person name="Zivanovic Y."/>
            <person name="Bolotin-Fukuhara M."/>
            <person name="Thierry A."/>
            <person name="Bouchier C."/>
            <person name="Caudron B."/>
            <person name="Scarpelli C."/>
            <person name="Gaillardin C."/>
            <person name="Weissenbach J."/>
            <person name="Wincker P."/>
            <person name="Souciet J.-L."/>
        </authorList>
    </citation>
    <scope>NUCLEOTIDE SEQUENCE [LARGE SCALE GENOMIC DNA]</scope>
    <source>
        <strain>ATCC 2001 / BCRC 20586 / JCM 3761 / NBRC 0622 / NRRL Y-65 / CBS 138</strain>
    </source>
</reference>
<evidence type="ECO:0000250" key="1"/>
<evidence type="ECO:0000305" key="2"/>
<accession>Q6FLA8</accession>
<name>RS23_CANGA</name>